<proteinExistence type="inferred from homology"/>
<reference key="1">
    <citation type="journal article" date="1995" name="J. Mol. Evol.">
        <title>Mammalian mitochondrial DNA evolution: a comparison of the cytochrome b and cytochrome c oxidase II genes.</title>
        <authorList>
            <person name="Honeycutt R.L."/>
            <person name="Nedbal M.A."/>
            <person name="Adkins R.M."/>
            <person name="Janecek L.L."/>
        </authorList>
    </citation>
    <scope>NUCLEOTIDE SEQUENCE [GENOMIC DNA]</scope>
</reference>
<gene>
    <name type="primary">MT-CO2</name>
    <name type="synonym">COII</name>
    <name type="synonym">COXII</name>
    <name type="synonym">MTCO2</name>
</gene>
<comment type="function">
    <text evidence="2">Component of the cytochrome c oxidase, the last enzyme in the mitochondrial electron transport chain which drives oxidative phosphorylation. The respiratory chain contains 3 multisubunit complexes succinate dehydrogenase (complex II, CII), ubiquinol-cytochrome c oxidoreductase (cytochrome b-c1 complex, complex III, CIII) and cytochrome c oxidase (complex IV, CIV), that cooperate to transfer electrons derived from NADH and succinate to molecular oxygen, creating an electrochemical gradient over the inner membrane that drives transmembrane transport and the ATP synthase. Cytochrome c oxidase is the component of the respiratory chain that catalyzes the reduction of oxygen to water. Electrons originating from reduced cytochrome c in the intermembrane space (IMS) are transferred via the dinuclear copper A center (CU(A)) of subunit 2 and heme A of subunit 1 to the active site in subunit 1, a binuclear center (BNC) formed by heme A3 and copper B (CU(B)). The BNC reduces molecular oxygen to 2 water molecules using 4 electrons from cytochrome c in the IMS and 4 protons from the mitochondrial matrix.</text>
</comment>
<comment type="catalytic activity">
    <reaction evidence="2">
        <text>4 Fe(II)-[cytochrome c] + O2 + 8 H(+)(in) = 4 Fe(III)-[cytochrome c] + 2 H2O + 4 H(+)(out)</text>
        <dbReference type="Rhea" id="RHEA:11436"/>
        <dbReference type="Rhea" id="RHEA-COMP:10350"/>
        <dbReference type="Rhea" id="RHEA-COMP:14399"/>
        <dbReference type="ChEBI" id="CHEBI:15377"/>
        <dbReference type="ChEBI" id="CHEBI:15378"/>
        <dbReference type="ChEBI" id="CHEBI:15379"/>
        <dbReference type="ChEBI" id="CHEBI:29033"/>
        <dbReference type="ChEBI" id="CHEBI:29034"/>
        <dbReference type="EC" id="7.1.1.9"/>
    </reaction>
    <physiologicalReaction direction="left-to-right" evidence="2">
        <dbReference type="Rhea" id="RHEA:11437"/>
    </physiologicalReaction>
</comment>
<comment type="cofactor">
    <cofactor evidence="3">
        <name>Cu cation</name>
        <dbReference type="ChEBI" id="CHEBI:23378"/>
    </cofactor>
    <text evidence="3">Binds a dinuclear copper A center per subunit.</text>
</comment>
<comment type="subunit">
    <text evidence="1 3">Component of the cytochrome c oxidase (complex IV, CIV), a multisubunit enzyme composed of 14 subunits. The complex is composed of a catalytic core of 3 subunits MT-CO1, MT-CO2 and MT-CO3, encoded in the mitochondrial DNA, and 11 supernumerary subunits COX4I, COX5A, COX5B, COX6A, COX6B, COX6C, COX7A, COX7B, COX7C, COX8 and NDUFA4, which are encoded in the nuclear genome. The complex exists as a monomer or a dimer and forms supercomplexes (SCs) in the inner mitochondrial membrane with NADH-ubiquinone oxidoreductase (complex I, CI) and ubiquinol-cytochrome c oxidoreductase (cytochrome b-c1 complex, complex III, CIII), resulting in different assemblies (supercomplex SCI(1)III(2)IV(1) and megacomplex MCI(2)III(2)IV(2)) (By similarity). Found in a complex with TMEM177, COA6, COX18, COX20, SCO1 and SCO2. Interacts with TMEM177 in a COX20-dependent manner. Interacts with COX20. Interacts with COX16 (By similarity).</text>
</comment>
<comment type="subcellular location">
    <subcellularLocation>
        <location evidence="3">Mitochondrion inner membrane</location>
        <topology evidence="3">Multi-pass membrane protein</topology>
    </subcellularLocation>
</comment>
<comment type="similarity">
    <text evidence="4">Belongs to the cytochrome c oxidase subunit 2 family.</text>
</comment>
<organism>
    <name type="scientific">Cratogeomys castanops</name>
    <name type="common">Yellow-faced pocket gopher</name>
    <name type="synonym">Pappogeomys castanops</name>
    <dbReference type="NCBI Taxonomy" id="37441"/>
    <lineage>
        <taxon>Eukaryota</taxon>
        <taxon>Metazoa</taxon>
        <taxon>Chordata</taxon>
        <taxon>Craniata</taxon>
        <taxon>Vertebrata</taxon>
        <taxon>Euteleostomi</taxon>
        <taxon>Mammalia</taxon>
        <taxon>Eutheria</taxon>
        <taxon>Euarchontoglires</taxon>
        <taxon>Glires</taxon>
        <taxon>Rodentia</taxon>
        <taxon>Castorimorpha</taxon>
        <taxon>Geomyidae</taxon>
        <taxon>Cratogeomys</taxon>
    </lineage>
</organism>
<name>COX2_CRACA</name>
<protein>
    <recommendedName>
        <fullName>Cytochrome c oxidase subunit 2</fullName>
        <ecNumber>7.1.1.9</ecNumber>
    </recommendedName>
    <alternativeName>
        <fullName>Cytochrome c oxidase polypeptide II</fullName>
    </alternativeName>
</protein>
<sequence>MAYPMQLGLQDATSPIMEELTDFHDHTLMIVFLISTLVLYIISLMLTTKLTHTNTMDAQEVETVWTILPAIILIMIALPSLRILYMMDEINDPYLTVKTMGHQWYWSYEYTDYEDLMFDSYMIATSDLKPGGLRLLEVDNRVVLPMELPVRMLVSSEDVLHSWAVPSLGLKTDAIPGRLNQATLISSRPGLYYGQCSEICGANHSFMPIVLEMVPLKQFESWTSSMT</sequence>
<dbReference type="EC" id="7.1.1.9"/>
<dbReference type="EMBL" id="U18828">
    <property type="protein sequence ID" value="AAA75610.1"/>
    <property type="molecule type" value="Genomic_DNA"/>
</dbReference>
<dbReference type="PIR" id="I48076">
    <property type="entry name" value="I48076"/>
</dbReference>
<dbReference type="SMR" id="P50662"/>
<dbReference type="GO" id="GO:0005743">
    <property type="term" value="C:mitochondrial inner membrane"/>
    <property type="evidence" value="ECO:0007669"/>
    <property type="project" value="UniProtKB-SubCell"/>
</dbReference>
<dbReference type="GO" id="GO:0045277">
    <property type="term" value="C:respiratory chain complex IV"/>
    <property type="evidence" value="ECO:0000250"/>
    <property type="project" value="UniProtKB"/>
</dbReference>
<dbReference type="GO" id="GO:0005507">
    <property type="term" value="F:copper ion binding"/>
    <property type="evidence" value="ECO:0007669"/>
    <property type="project" value="InterPro"/>
</dbReference>
<dbReference type="GO" id="GO:0004129">
    <property type="term" value="F:cytochrome-c oxidase activity"/>
    <property type="evidence" value="ECO:0007669"/>
    <property type="project" value="UniProtKB-EC"/>
</dbReference>
<dbReference type="GO" id="GO:0042773">
    <property type="term" value="P:ATP synthesis coupled electron transport"/>
    <property type="evidence" value="ECO:0007669"/>
    <property type="project" value="TreeGrafter"/>
</dbReference>
<dbReference type="CDD" id="cd13912">
    <property type="entry name" value="CcO_II_C"/>
    <property type="match status" value="1"/>
</dbReference>
<dbReference type="FunFam" id="1.10.287.90:FF:000001">
    <property type="entry name" value="Cytochrome c oxidase subunit 2"/>
    <property type="match status" value="1"/>
</dbReference>
<dbReference type="FunFam" id="2.60.40.420:FF:000001">
    <property type="entry name" value="Cytochrome c oxidase subunit 2"/>
    <property type="match status" value="1"/>
</dbReference>
<dbReference type="Gene3D" id="1.10.287.90">
    <property type="match status" value="1"/>
</dbReference>
<dbReference type="Gene3D" id="2.60.40.420">
    <property type="entry name" value="Cupredoxins - blue copper proteins"/>
    <property type="match status" value="1"/>
</dbReference>
<dbReference type="InterPro" id="IPR045187">
    <property type="entry name" value="CcO_II"/>
</dbReference>
<dbReference type="InterPro" id="IPR002429">
    <property type="entry name" value="CcO_II-like_C"/>
</dbReference>
<dbReference type="InterPro" id="IPR034210">
    <property type="entry name" value="CcO_II_C"/>
</dbReference>
<dbReference type="InterPro" id="IPR001505">
    <property type="entry name" value="Copper_CuA"/>
</dbReference>
<dbReference type="InterPro" id="IPR008972">
    <property type="entry name" value="Cupredoxin"/>
</dbReference>
<dbReference type="InterPro" id="IPR014222">
    <property type="entry name" value="Cyt_c_oxidase_su2"/>
</dbReference>
<dbReference type="InterPro" id="IPR011759">
    <property type="entry name" value="Cyt_c_oxidase_su2_TM_dom"/>
</dbReference>
<dbReference type="InterPro" id="IPR036257">
    <property type="entry name" value="Cyt_c_oxidase_su2_TM_sf"/>
</dbReference>
<dbReference type="NCBIfam" id="TIGR02866">
    <property type="entry name" value="CoxB"/>
    <property type="match status" value="1"/>
</dbReference>
<dbReference type="PANTHER" id="PTHR22888:SF9">
    <property type="entry name" value="CYTOCHROME C OXIDASE SUBUNIT 2"/>
    <property type="match status" value="1"/>
</dbReference>
<dbReference type="PANTHER" id="PTHR22888">
    <property type="entry name" value="CYTOCHROME C OXIDASE, SUBUNIT II"/>
    <property type="match status" value="1"/>
</dbReference>
<dbReference type="Pfam" id="PF00116">
    <property type="entry name" value="COX2"/>
    <property type="match status" value="1"/>
</dbReference>
<dbReference type="Pfam" id="PF02790">
    <property type="entry name" value="COX2_TM"/>
    <property type="match status" value="1"/>
</dbReference>
<dbReference type="PRINTS" id="PR01166">
    <property type="entry name" value="CYCOXIDASEII"/>
</dbReference>
<dbReference type="SUPFAM" id="SSF49503">
    <property type="entry name" value="Cupredoxins"/>
    <property type="match status" value="1"/>
</dbReference>
<dbReference type="SUPFAM" id="SSF81464">
    <property type="entry name" value="Cytochrome c oxidase subunit II-like, transmembrane region"/>
    <property type="match status" value="1"/>
</dbReference>
<dbReference type="PROSITE" id="PS00078">
    <property type="entry name" value="COX2"/>
    <property type="match status" value="1"/>
</dbReference>
<dbReference type="PROSITE" id="PS50857">
    <property type="entry name" value="COX2_CUA"/>
    <property type="match status" value="1"/>
</dbReference>
<dbReference type="PROSITE" id="PS50999">
    <property type="entry name" value="COX2_TM"/>
    <property type="match status" value="1"/>
</dbReference>
<keyword id="KW-0186">Copper</keyword>
<keyword id="KW-0249">Electron transport</keyword>
<keyword id="KW-0460">Magnesium</keyword>
<keyword id="KW-0472">Membrane</keyword>
<keyword id="KW-0479">Metal-binding</keyword>
<keyword id="KW-0496">Mitochondrion</keyword>
<keyword id="KW-0999">Mitochondrion inner membrane</keyword>
<keyword id="KW-0679">Respiratory chain</keyword>
<keyword id="KW-1278">Translocase</keyword>
<keyword id="KW-0812">Transmembrane</keyword>
<keyword id="KW-1133">Transmembrane helix</keyword>
<keyword id="KW-0813">Transport</keyword>
<accession>P50662</accession>
<geneLocation type="mitochondrion"/>
<evidence type="ECO:0000250" key="1">
    <source>
        <dbReference type="UniProtKB" id="P00403"/>
    </source>
</evidence>
<evidence type="ECO:0000250" key="2">
    <source>
        <dbReference type="UniProtKB" id="P00410"/>
    </source>
</evidence>
<evidence type="ECO:0000250" key="3">
    <source>
        <dbReference type="UniProtKB" id="P68530"/>
    </source>
</evidence>
<evidence type="ECO:0000305" key="4"/>
<feature type="chain" id="PRO_0000183557" description="Cytochrome c oxidase subunit 2">
    <location>
        <begin position="1"/>
        <end position="227"/>
    </location>
</feature>
<feature type="topological domain" description="Mitochondrial intermembrane" evidence="3">
    <location>
        <begin position="1"/>
        <end position="14"/>
    </location>
</feature>
<feature type="transmembrane region" description="Helical; Name=I" evidence="3">
    <location>
        <begin position="15"/>
        <end position="45"/>
    </location>
</feature>
<feature type="topological domain" description="Mitochondrial matrix" evidence="3">
    <location>
        <begin position="46"/>
        <end position="59"/>
    </location>
</feature>
<feature type="transmembrane region" description="Helical; Name=II" evidence="3">
    <location>
        <begin position="60"/>
        <end position="87"/>
    </location>
</feature>
<feature type="topological domain" description="Mitochondrial intermembrane" evidence="3">
    <location>
        <begin position="88"/>
        <end position="227"/>
    </location>
</feature>
<feature type="binding site" evidence="3">
    <location>
        <position position="161"/>
    </location>
    <ligand>
        <name>Cu cation</name>
        <dbReference type="ChEBI" id="CHEBI:23378"/>
        <label>A1</label>
    </ligand>
</feature>
<feature type="binding site" evidence="3">
    <location>
        <position position="196"/>
    </location>
    <ligand>
        <name>Cu cation</name>
        <dbReference type="ChEBI" id="CHEBI:23378"/>
        <label>A1</label>
    </ligand>
</feature>
<feature type="binding site" evidence="3">
    <location>
        <position position="196"/>
    </location>
    <ligand>
        <name>Cu cation</name>
        <dbReference type="ChEBI" id="CHEBI:23378"/>
        <label>A2</label>
    </ligand>
</feature>
<feature type="binding site" evidence="3">
    <location>
        <position position="198"/>
    </location>
    <ligand>
        <name>Cu cation</name>
        <dbReference type="ChEBI" id="CHEBI:23378"/>
        <label>A2</label>
    </ligand>
</feature>
<feature type="binding site" evidence="3">
    <location>
        <position position="198"/>
    </location>
    <ligand>
        <name>Mg(2+)</name>
        <dbReference type="ChEBI" id="CHEBI:18420"/>
        <note>ligand shared with MT-CO1</note>
    </ligand>
</feature>
<feature type="binding site" evidence="3">
    <location>
        <position position="200"/>
    </location>
    <ligand>
        <name>Cu cation</name>
        <dbReference type="ChEBI" id="CHEBI:23378"/>
        <label>A1</label>
    </ligand>
</feature>
<feature type="binding site" evidence="3">
    <location>
        <position position="200"/>
    </location>
    <ligand>
        <name>Cu cation</name>
        <dbReference type="ChEBI" id="CHEBI:23378"/>
        <label>A2</label>
    </ligand>
</feature>
<feature type="binding site" evidence="3">
    <location>
        <position position="204"/>
    </location>
    <ligand>
        <name>Cu cation</name>
        <dbReference type="ChEBI" id="CHEBI:23378"/>
        <label>A2</label>
    </ligand>
</feature>
<feature type="binding site" evidence="3">
    <location>
        <position position="207"/>
    </location>
    <ligand>
        <name>Cu cation</name>
        <dbReference type="ChEBI" id="CHEBI:23378"/>
        <label>A1</label>
    </ligand>
</feature>